<evidence type="ECO:0000305" key="1"/>
<sequence length="354" mass="40129">MEHFDVAIIGLGPAGSALARKLAGKMQVIALDKKHQCGTEGFSKPCGGLLAPDAQRSFIRDGLTLPVDVIANPQIFSVKTVDVAASLTRNYQRSYININRHAFDLWMKSLIPTSVEVYHDSLCRKIWREDDKWHVIFRADGWEQHITARYLVGADGANSMVRRHLYPDHQIRKYVAIQQWFAEKHPVPFYSCIFDNAITDCYSWSISKDGYFIFGGAYPMKDGQTRFTTLKEKMSAFQFQFGKAVKSEKCTVLFPSRWQDFVCGKDNAFLIGEAAGFISASSLEGISYALDSADILRSVLLKQPEKLNTAYWRATRKLRLKLFGKIVKSRCLTAPALRKWIMRSGMAHIPQLKD</sequence>
<comment type="similarity">
    <text evidence="1">Belongs to the CbrA family.</text>
</comment>
<keyword id="KW-1185">Reference proteome</keyword>
<proteinExistence type="inferred from homology"/>
<reference key="1">
    <citation type="journal article" date="2008" name="J. Bacteriol.">
        <title>The pangenome structure of Escherichia coli: comparative genomic analysis of E. coli commensal and pathogenic isolates.</title>
        <authorList>
            <person name="Rasko D.A."/>
            <person name="Rosovitz M.J."/>
            <person name="Myers G.S.A."/>
            <person name="Mongodin E.F."/>
            <person name="Fricke W.F."/>
            <person name="Gajer P."/>
            <person name="Crabtree J."/>
            <person name="Sebaihia M."/>
            <person name="Thomson N.R."/>
            <person name="Chaudhuri R."/>
            <person name="Henderson I.R."/>
            <person name="Sperandio V."/>
            <person name="Ravel J."/>
        </authorList>
    </citation>
    <scope>NUCLEOTIDE SEQUENCE [LARGE SCALE GENOMIC DNA]</scope>
    <source>
        <strain>E24377A / ETEC</strain>
    </source>
</reference>
<accession>A7ZTP5</accession>
<feature type="chain" id="PRO_0000320281" description="Protein CbrA">
    <location>
        <begin position="1"/>
        <end position="354"/>
    </location>
</feature>
<organism>
    <name type="scientific">Escherichia coli O139:H28 (strain E24377A / ETEC)</name>
    <dbReference type="NCBI Taxonomy" id="331111"/>
    <lineage>
        <taxon>Bacteria</taxon>
        <taxon>Pseudomonadati</taxon>
        <taxon>Pseudomonadota</taxon>
        <taxon>Gammaproteobacteria</taxon>
        <taxon>Enterobacterales</taxon>
        <taxon>Enterobacteriaceae</taxon>
        <taxon>Escherichia</taxon>
    </lineage>
</organism>
<name>CBRA_ECO24</name>
<dbReference type="EMBL" id="CP000800">
    <property type="protein sequence ID" value="ABV20977.1"/>
    <property type="molecule type" value="Genomic_DNA"/>
</dbReference>
<dbReference type="RefSeq" id="WP_012139586.1">
    <property type="nucleotide sequence ID" value="NC_009801.1"/>
</dbReference>
<dbReference type="SMR" id="A7ZTP5"/>
<dbReference type="KEGG" id="ecw:EcE24377A_4200"/>
<dbReference type="HOGENOM" id="CLU_024648_1_0_6"/>
<dbReference type="Proteomes" id="UP000001122">
    <property type="component" value="Chromosome"/>
</dbReference>
<dbReference type="GO" id="GO:0071949">
    <property type="term" value="F:FAD binding"/>
    <property type="evidence" value="ECO:0007669"/>
    <property type="project" value="InterPro"/>
</dbReference>
<dbReference type="FunFam" id="3.50.50.60:FF:000151">
    <property type="entry name" value="Protein CbrA"/>
    <property type="match status" value="1"/>
</dbReference>
<dbReference type="Gene3D" id="3.50.50.60">
    <property type="entry name" value="FAD/NAD(P)-binding domain"/>
    <property type="match status" value="1"/>
</dbReference>
<dbReference type="InterPro" id="IPR002938">
    <property type="entry name" value="FAD-bd"/>
</dbReference>
<dbReference type="InterPro" id="IPR036188">
    <property type="entry name" value="FAD/NAD-bd_sf"/>
</dbReference>
<dbReference type="InterPro" id="IPR050407">
    <property type="entry name" value="Geranylgeranyl_reductase"/>
</dbReference>
<dbReference type="NCBIfam" id="NF008519">
    <property type="entry name" value="PRK11445.1"/>
    <property type="match status" value="1"/>
</dbReference>
<dbReference type="PANTHER" id="PTHR42685:SF22">
    <property type="entry name" value="CONDITIONED MEDIUM FACTOR RECEPTOR 1"/>
    <property type="match status" value="1"/>
</dbReference>
<dbReference type="PANTHER" id="PTHR42685">
    <property type="entry name" value="GERANYLGERANYL DIPHOSPHATE REDUCTASE"/>
    <property type="match status" value="1"/>
</dbReference>
<dbReference type="Pfam" id="PF01494">
    <property type="entry name" value="FAD_binding_3"/>
    <property type="match status" value="1"/>
</dbReference>
<dbReference type="PRINTS" id="PR00420">
    <property type="entry name" value="RNGMNOXGNASE"/>
</dbReference>
<dbReference type="SUPFAM" id="SSF51905">
    <property type="entry name" value="FAD/NAD(P)-binding domain"/>
    <property type="match status" value="1"/>
</dbReference>
<protein>
    <recommendedName>
        <fullName>Protein CbrA</fullName>
    </recommendedName>
</protein>
<gene>
    <name type="primary">cbrA</name>
    <name type="ordered locus">EcE24377A_4200</name>
</gene>